<accession>B2U394</accession>
<gene>
    <name evidence="1" type="primary">rplT</name>
    <name type="ordered locus">SbBS512_E1958</name>
</gene>
<protein>
    <recommendedName>
        <fullName evidence="1">Large ribosomal subunit protein bL20</fullName>
    </recommendedName>
    <alternativeName>
        <fullName evidence="2">50S ribosomal protein L20</fullName>
    </alternativeName>
</protein>
<feature type="chain" id="PRO_1000122373" description="Large ribosomal subunit protein bL20">
    <location>
        <begin position="1"/>
        <end position="118"/>
    </location>
</feature>
<name>RL20_SHIB3</name>
<proteinExistence type="inferred from homology"/>
<reference key="1">
    <citation type="submission" date="2008-05" db="EMBL/GenBank/DDBJ databases">
        <title>Complete sequence of Shigella boydii serotype 18 strain BS512.</title>
        <authorList>
            <person name="Rasko D.A."/>
            <person name="Rosovitz M."/>
            <person name="Maurelli A.T."/>
            <person name="Myers G."/>
            <person name="Seshadri R."/>
            <person name="Cer R."/>
            <person name="Jiang L."/>
            <person name="Ravel J."/>
            <person name="Sebastian Y."/>
        </authorList>
    </citation>
    <scope>NUCLEOTIDE SEQUENCE [LARGE SCALE GENOMIC DNA]</scope>
    <source>
        <strain>CDC 3083-94 / BS512</strain>
    </source>
</reference>
<comment type="function">
    <text evidence="1">Binds directly to 23S ribosomal RNA and is necessary for the in vitro assembly process of the 50S ribosomal subunit. It is not involved in the protein synthesizing functions of that subunit.</text>
</comment>
<comment type="similarity">
    <text evidence="1">Belongs to the bacterial ribosomal protein bL20 family.</text>
</comment>
<evidence type="ECO:0000255" key="1">
    <source>
        <dbReference type="HAMAP-Rule" id="MF_00382"/>
    </source>
</evidence>
<evidence type="ECO:0000305" key="2"/>
<dbReference type="EMBL" id="CP001063">
    <property type="protein sequence ID" value="ACD07487.1"/>
    <property type="molecule type" value="Genomic_DNA"/>
</dbReference>
<dbReference type="RefSeq" id="WP_000124850.1">
    <property type="nucleotide sequence ID" value="NC_010658.1"/>
</dbReference>
<dbReference type="SMR" id="B2U394"/>
<dbReference type="STRING" id="344609.SbBS512_E1958"/>
<dbReference type="GeneID" id="98388757"/>
<dbReference type="KEGG" id="sbc:SbBS512_E1958"/>
<dbReference type="HOGENOM" id="CLU_123265_0_1_6"/>
<dbReference type="Proteomes" id="UP000001030">
    <property type="component" value="Chromosome"/>
</dbReference>
<dbReference type="GO" id="GO:1990904">
    <property type="term" value="C:ribonucleoprotein complex"/>
    <property type="evidence" value="ECO:0007669"/>
    <property type="project" value="UniProtKB-KW"/>
</dbReference>
<dbReference type="GO" id="GO:0005840">
    <property type="term" value="C:ribosome"/>
    <property type="evidence" value="ECO:0007669"/>
    <property type="project" value="UniProtKB-KW"/>
</dbReference>
<dbReference type="GO" id="GO:0019843">
    <property type="term" value="F:rRNA binding"/>
    <property type="evidence" value="ECO:0007669"/>
    <property type="project" value="UniProtKB-UniRule"/>
</dbReference>
<dbReference type="GO" id="GO:0003735">
    <property type="term" value="F:structural constituent of ribosome"/>
    <property type="evidence" value="ECO:0007669"/>
    <property type="project" value="InterPro"/>
</dbReference>
<dbReference type="GO" id="GO:0000027">
    <property type="term" value="P:ribosomal large subunit assembly"/>
    <property type="evidence" value="ECO:0007669"/>
    <property type="project" value="UniProtKB-UniRule"/>
</dbReference>
<dbReference type="GO" id="GO:0006412">
    <property type="term" value="P:translation"/>
    <property type="evidence" value="ECO:0007669"/>
    <property type="project" value="InterPro"/>
</dbReference>
<dbReference type="CDD" id="cd07026">
    <property type="entry name" value="Ribosomal_L20"/>
    <property type="match status" value="1"/>
</dbReference>
<dbReference type="FunFam" id="1.10.1900.20:FF:000001">
    <property type="entry name" value="50S ribosomal protein L20"/>
    <property type="match status" value="1"/>
</dbReference>
<dbReference type="Gene3D" id="6.10.160.10">
    <property type="match status" value="1"/>
</dbReference>
<dbReference type="Gene3D" id="1.10.1900.20">
    <property type="entry name" value="Ribosomal protein L20"/>
    <property type="match status" value="1"/>
</dbReference>
<dbReference type="HAMAP" id="MF_00382">
    <property type="entry name" value="Ribosomal_bL20"/>
    <property type="match status" value="1"/>
</dbReference>
<dbReference type="InterPro" id="IPR005813">
    <property type="entry name" value="Ribosomal_bL20"/>
</dbReference>
<dbReference type="InterPro" id="IPR049946">
    <property type="entry name" value="RIBOSOMAL_L20_CS"/>
</dbReference>
<dbReference type="InterPro" id="IPR035566">
    <property type="entry name" value="Ribosomal_protein_bL20_C"/>
</dbReference>
<dbReference type="NCBIfam" id="TIGR01032">
    <property type="entry name" value="rplT_bact"/>
    <property type="match status" value="1"/>
</dbReference>
<dbReference type="PANTHER" id="PTHR10986">
    <property type="entry name" value="39S RIBOSOMAL PROTEIN L20"/>
    <property type="match status" value="1"/>
</dbReference>
<dbReference type="Pfam" id="PF00453">
    <property type="entry name" value="Ribosomal_L20"/>
    <property type="match status" value="1"/>
</dbReference>
<dbReference type="PRINTS" id="PR00062">
    <property type="entry name" value="RIBOSOMALL20"/>
</dbReference>
<dbReference type="SUPFAM" id="SSF74731">
    <property type="entry name" value="Ribosomal protein L20"/>
    <property type="match status" value="1"/>
</dbReference>
<dbReference type="PROSITE" id="PS00937">
    <property type="entry name" value="RIBOSOMAL_L20"/>
    <property type="match status" value="1"/>
</dbReference>
<organism>
    <name type="scientific">Shigella boydii serotype 18 (strain CDC 3083-94 / BS512)</name>
    <dbReference type="NCBI Taxonomy" id="344609"/>
    <lineage>
        <taxon>Bacteria</taxon>
        <taxon>Pseudomonadati</taxon>
        <taxon>Pseudomonadota</taxon>
        <taxon>Gammaproteobacteria</taxon>
        <taxon>Enterobacterales</taxon>
        <taxon>Enterobacteriaceae</taxon>
        <taxon>Shigella</taxon>
    </lineage>
</organism>
<sequence length="118" mass="13497">MARVKRGVIARARHKKILKQAKGYYGARSRVYRVAFQAVIKAGQYAYRDRRQRKRQFRQLWIARINAAARQNGISYSKFINGLKKASVEIDRKILADIAVFDKVAFTALVEKAKAALA</sequence>
<keyword id="KW-1185">Reference proteome</keyword>
<keyword id="KW-0687">Ribonucleoprotein</keyword>
<keyword id="KW-0689">Ribosomal protein</keyword>
<keyword id="KW-0694">RNA-binding</keyword>
<keyword id="KW-0699">rRNA-binding</keyword>